<organism>
    <name type="scientific">Neurospora sitophila</name>
    <name type="common">Chrysonilia sitophila</name>
    <dbReference type="NCBI Taxonomy" id="40126"/>
    <lineage>
        <taxon>Eukaryota</taxon>
        <taxon>Fungi</taxon>
        <taxon>Dikarya</taxon>
        <taxon>Ascomycota</taxon>
        <taxon>Pezizomycotina</taxon>
        <taxon>Sordariomycetes</taxon>
        <taxon>Sordariomycetidae</taxon>
        <taxon>Sordariales</taxon>
        <taxon>Sordariaceae</taxon>
        <taxon>Neurospora</taxon>
    </lineage>
</organism>
<keyword id="KW-0007">Acetylation</keyword>
<keyword id="KW-0521">NADP</keyword>
<keyword id="KW-0560">Oxidoreductase</keyword>
<name>DHE4_NEUSI</name>
<reference key="1">
    <citation type="submission" date="2000-07" db="EMBL/GenBank/DDBJ databases">
        <title>The Neurospora GDH gene can increase the nitrogen assimilation in transgene tobacco.</title>
        <authorList>
            <person name="Wang F."/>
            <person name="Tien P."/>
        </authorList>
    </citation>
    <scope>NUCLEOTIDE SEQUENCE [MRNA]</scope>
</reference>
<accession>Q9HGU3</accession>
<protein>
    <recommendedName>
        <fullName>NADP-specific glutamate dehydrogenase</fullName>
        <shortName>NADP-GDH</shortName>
        <ecNumber>1.4.1.4</ecNumber>
    </recommendedName>
    <alternativeName>
        <fullName>NADP-dependent glutamate dehydrogenase</fullName>
    </alternativeName>
</protein>
<sequence length="454" mass="48835">MSNLPSEPEFEQAYKELAYTLENSSLFQKHPEYRTALAVASIPERVIQFRVVWEDDNGNVQVNRGYRVQFNSALGPYKGGLRLHPSVNLSILKFLGFEQIFKNALTGLSMGGGKGGADFDPKGKSDAEIRRFCCAFMAELHKHIGADTDVPAGDIGVGGREIGYMFGAYRKAANRFEGVLTGKGLSWGGSLIRPEATGYGLVYYVGHMLEYSGAGSYAGKRVALSGSGNVAQYAALKLIELGATVVSLSDSKGALVATGESGITVEDINAIMAIKEARQSLTTFQHAGHVKWIEGARPWLHVGKVDIALPCATQNEVSKEEAEGLLAAGCKFVAEGSNMGCTLEAIEVFENNRKEKKGEAVWYAPGKAANCGGVAVSGLEMAQNSQRLNWTQAEVDEKLKDIMKNAFFNGLNTAKTYAEAAEGELPSLVAGSNIAGFVKVPQAMHDQGDWWSKN</sequence>
<gene>
    <name type="primary">GDH</name>
</gene>
<evidence type="ECO:0000250" key="1"/>
<evidence type="ECO:0000255" key="2">
    <source>
        <dbReference type="PROSITE-ProRule" id="PRU10011"/>
    </source>
</evidence>
<evidence type="ECO:0000305" key="3"/>
<proteinExistence type="evidence at transcript level"/>
<dbReference type="EC" id="1.4.1.4"/>
<dbReference type="EMBL" id="AF285428">
    <property type="protein sequence ID" value="AAG01159.1"/>
    <property type="molecule type" value="mRNA"/>
</dbReference>
<dbReference type="SMR" id="Q9HGU3"/>
<dbReference type="GO" id="GO:0005829">
    <property type="term" value="C:cytosol"/>
    <property type="evidence" value="ECO:0007669"/>
    <property type="project" value="TreeGrafter"/>
</dbReference>
<dbReference type="GO" id="GO:0004354">
    <property type="term" value="F:glutamate dehydrogenase (NADP+) activity"/>
    <property type="evidence" value="ECO:0007669"/>
    <property type="project" value="UniProtKB-EC"/>
</dbReference>
<dbReference type="GO" id="GO:0006537">
    <property type="term" value="P:glutamate biosynthetic process"/>
    <property type="evidence" value="ECO:0007669"/>
    <property type="project" value="TreeGrafter"/>
</dbReference>
<dbReference type="CDD" id="cd05313">
    <property type="entry name" value="NAD_bind_2_Glu_DH"/>
    <property type="match status" value="1"/>
</dbReference>
<dbReference type="FunFam" id="1.10.285.10:FF:000001">
    <property type="entry name" value="Glutamate dehydrogenase"/>
    <property type="match status" value="1"/>
</dbReference>
<dbReference type="FunFam" id="1.10.285.10:FF:000003">
    <property type="entry name" value="Glutamate dehydrogenase"/>
    <property type="match status" value="1"/>
</dbReference>
<dbReference type="FunFam" id="3.40.50.10860:FF:000002">
    <property type="entry name" value="Glutamate dehydrogenase"/>
    <property type="match status" value="1"/>
</dbReference>
<dbReference type="FunFam" id="3.40.50.720:FF:000030">
    <property type="entry name" value="Glutamate dehydrogenase"/>
    <property type="match status" value="1"/>
</dbReference>
<dbReference type="Gene3D" id="1.10.285.10">
    <property type="entry name" value="Glutamate Dehydrogenase, chain A, domain 3"/>
    <property type="match status" value="2"/>
</dbReference>
<dbReference type="Gene3D" id="3.40.50.10860">
    <property type="entry name" value="Leucine Dehydrogenase, chain A, domain 1"/>
    <property type="match status" value="1"/>
</dbReference>
<dbReference type="Gene3D" id="3.40.50.720">
    <property type="entry name" value="NAD(P)-binding Rossmann-like Domain"/>
    <property type="match status" value="1"/>
</dbReference>
<dbReference type="InterPro" id="IPR046346">
    <property type="entry name" value="Aminoacid_DH-like_N_sf"/>
</dbReference>
<dbReference type="InterPro" id="IPR006095">
    <property type="entry name" value="Glu/Leu/Phe/Val/Trp_DH"/>
</dbReference>
<dbReference type="InterPro" id="IPR006096">
    <property type="entry name" value="Glu/Leu/Phe/Val/Trp_DH_C"/>
</dbReference>
<dbReference type="InterPro" id="IPR006097">
    <property type="entry name" value="Glu/Leu/Phe/Val/Trp_DH_dimer"/>
</dbReference>
<dbReference type="InterPro" id="IPR033524">
    <property type="entry name" value="Glu/Leu/Phe/Val_DH_AS"/>
</dbReference>
<dbReference type="InterPro" id="IPR014362">
    <property type="entry name" value="Glu_DH"/>
</dbReference>
<dbReference type="InterPro" id="IPR050724">
    <property type="entry name" value="Glu_Leu_Phe_Val_DH"/>
</dbReference>
<dbReference type="InterPro" id="IPR036291">
    <property type="entry name" value="NAD(P)-bd_dom_sf"/>
</dbReference>
<dbReference type="InterPro" id="IPR033922">
    <property type="entry name" value="NAD_bind_Glu_DH"/>
</dbReference>
<dbReference type="NCBIfam" id="NF006929">
    <property type="entry name" value="PRK09414.1"/>
    <property type="match status" value="1"/>
</dbReference>
<dbReference type="PANTHER" id="PTHR43571">
    <property type="entry name" value="NADP-SPECIFIC GLUTAMATE DEHYDROGENASE 1-RELATED"/>
    <property type="match status" value="1"/>
</dbReference>
<dbReference type="PANTHER" id="PTHR43571:SF1">
    <property type="entry name" value="NADP-SPECIFIC GLUTAMATE DEHYDROGENASE 1-RELATED"/>
    <property type="match status" value="1"/>
</dbReference>
<dbReference type="Pfam" id="PF00208">
    <property type="entry name" value="ELFV_dehydrog"/>
    <property type="match status" value="1"/>
</dbReference>
<dbReference type="Pfam" id="PF02812">
    <property type="entry name" value="ELFV_dehydrog_N"/>
    <property type="match status" value="1"/>
</dbReference>
<dbReference type="PIRSF" id="PIRSF000185">
    <property type="entry name" value="Glu_DH"/>
    <property type="match status" value="1"/>
</dbReference>
<dbReference type="PRINTS" id="PR00082">
    <property type="entry name" value="GLFDHDRGNASE"/>
</dbReference>
<dbReference type="SMART" id="SM00839">
    <property type="entry name" value="ELFV_dehydrog"/>
    <property type="match status" value="1"/>
</dbReference>
<dbReference type="SUPFAM" id="SSF53223">
    <property type="entry name" value="Aminoacid dehydrogenase-like, N-terminal domain"/>
    <property type="match status" value="1"/>
</dbReference>
<dbReference type="SUPFAM" id="SSF51735">
    <property type="entry name" value="NAD(P)-binding Rossmann-fold domains"/>
    <property type="match status" value="1"/>
</dbReference>
<dbReference type="PROSITE" id="PS00074">
    <property type="entry name" value="GLFV_DEHYDROGENASE"/>
    <property type="match status" value="1"/>
</dbReference>
<feature type="initiator methionine" description="Removed" evidence="1">
    <location>
        <position position="1"/>
    </location>
</feature>
<feature type="chain" id="PRO_0000182792" description="NADP-specific glutamate dehydrogenase">
    <location>
        <begin position="2"/>
        <end position="454"/>
    </location>
</feature>
<feature type="active site" evidence="2">
    <location>
        <position position="114"/>
    </location>
</feature>
<feature type="modified residue" description="N-acetylserine" evidence="1">
    <location>
        <position position="2"/>
    </location>
</feature>
<comment type="catalytic activity">
    <reaction>
        <text>L-glutamate + NADP(+) + H2O = 2-oxoglutarate + NH4(+) + NADPH + H(+)</text>
        <dbReference type="Rhea" id="RHEA:11612"/>
        <dbReference type="ChEBI" id="CHEBI:15377"/>
        <dbReference type="ChEBI" id="CHEBI:15378"/>
        <dbReference type="ChEBI" id="CHEBI:16810"/>
        <dbReference type="ChEBI" id="CHEBI:28938"/>
        <dbReference type="ChEBI" id="CHEBI:29985"/>
        <dbReference type="ChEBI" id="CHEBI:57783"/>
        <dbReference type="ChEBI" id="CHEBI:58349"/>
        <dbReference type="EC" id="1.4.1.4"/>
    </reaction>
</comment>
<comment type="subunit">
    <text evidence="1">Homohexamer.</text>
</comment>
<comment type="similarity">
    <text evidence="3">Belongs to the Glu/Leu/Phe/Val dehydrogenases family.</text>
</comment>